<protein>
    <recommendedName>
        <fullName>Phosphatidylinositol-3-phosphatase SAC1-A</fullName>
        <ecNumber evidence="1">3.1.3.64</ecNumber>
    </recommendedName>
    <alternativeName>
        <fullName evidence="1">Phosphatidylinositol-4-phosphate phosphatase</fullName>
    </alternativeName>
    <alternativeName>
        <fullName>Suppressor of actin mutations 1-like protein A</fullName>
    </alternativeName>
</protein>
<dbReference type="EC" id="3.1.3.64" evidence="1"/>
<dbReference type="EMBL" id="CR933768">
    <property type="protein sequence ID" value="CAK04253.1"/>
    <property type="molecule type" value="Genomic_DNA"/>
</dbReference>
<dbReference type="EMBL" id="BX537337">
    <property type="protein sequence ID" value="CAK04253.1"/>
    <property type="status" value="JOINED"/>
    <property type="molecule type" value="Genomic_DNA"/>
</dbReference>
<dbReference type="EMBL" id="BX537337">
    <property type="protein sequence ID" value="CAK04562.1"/>
    <property type="molecule type" value="Genomic_DNA"/>
</dbReference>
<dbReference type="EMBL" id="CR933768">
    <property type="protein sequence ID" value="CAK04562.1"/>
    <property type="status" value="JOINED"/>
    <property type="molecule type" value="Genomic_DNA"/>
</dbReference>
<dbReference type="EMBL" id="BC139689">
    <property type="protein sequence ID" value="AAI39690.1"/>
    <property type="molecule type" value="mRNA"/>
</dbReference>
<dbReference type="RefSeq" id="NP_001038343.2">
    <property type="nucleotide sequence ID" value="NM_001044878.2"/>
</dbReference>
<dbReference type="SMR" id="A4VCH0"/>
<dbReference type="FunCoup" id="A4VCH0">
    <property type="interactions" value="3246"/>
</dbReference>
<dbReference type="STRING" id="7955.ENSDARP00000083973"/>
<dbReference type="PaxDb" id="7955-ENSDARP00000083973"/>
<dbReference type="PeptideAtlas" id="A4VCH0"/>
<dbReference type="Ensembl" id="ENSDART00000089540">
    <property type="protein sequence ID" value="ENSDARP00000083973"/>
    <property type="gene ID" value="ENSDARG00000015290"/>
</dbReference>
<dbReference type="GeneID" id="558940"/>
<dbReference type="KEGG" id="dre:558940"/>
<dbReference type="AGR" id="ZFIN:ZDB-GENE-060503-122"/>
<dbReference type="CTD" id="558940"/>
<dbReference type="ZFIN" id="ZDB-GENE-060503-122">
    <property type="gene designation" value="sacm1la"/>
</dbReference>
<dbReference type="eggNOG" id="KOG1889">
    <property type="taxonomic scope" value="Eukaryota"/>
</dbReference>
<dbReference type="HOGENOM" id="CLU_003016_7_4_1"/>
<dbReference type="InParanoid" id="A4VCH0"/>
<dbReference type="OMA" id="QHFITSI"/>
<dbReference type="OrthoDB" id="405996at2759"/>
<dbReference type="PhylomeDB" id="A4VCH0"/>
<dbReference type="TreeFam" id="TF313543"/>
<dbReference type="PRO" id="PR:A4VCH0"/>
<dbReference type="Proteomes" id="UP000000437">
    <property type="component" value="Chromosome 19"/>
</dbReference>
<dbReference type="Bgee" id="ENSDARG00000015290">
    <property type="expression patterns" value="Expressed in zone of skin and 21 other cell types or tissues"/>
</dbReference>
<dbReference type="GO" id="GO:0005783">
    <property type="term" value="C:endoplasmic reticulum"/>
    <property type="evidence" value="ECO:0000318"/>
    <property type="project" value="GO_Central"/>
</dbReference>
<dbReference type="GO" id="GO:0005789">
    <property type="term" value="C:endoplasmic reticulum membrane"/>
    <property type="evidence" value="ECO:0000250"/>
    <property type="project" value="UniProtKB"/>
</dbReference>
<dbReference type="GO" id="GO:0140268">
    <property type="term" value="C:endoplasmic reticulum-plasma membrane contact site"/>
    <property type="evidence" value="ECO:0000250"/>
    <property type="project" value="UniProtKB"/>
</dbReference>
<dbReference type="GO" id="GO:0000139">
    <property type="term" value="C:Golgi membrane"/>
    <property type="evidence" value="ECO:0000250"/>
    <property type="project" value="UniProtKB"/>
</dbReference>
<dbReference type="GO" id="GO:0016791">
    <property type="term" value="F:phosphatase activity"/>
    <property type="evidence" value="ECO:0000250"/>
    <property type="project" value="UniProtKB"/>
</dbReference>
<dbReference type="GO" id="GO:0004438">
    <property type="term" value="F:phosphatidylinositol-3-phosphate phosphatase activity"/>
    <property type="evidence" value="ECO:0007669"/>
    <property type="project" value="UniProtKB-EC"/>
</dbReference>
<dbReference type="GO" id="GO:0043812">
    <property type="term" value="F:phosphatidylinositol-4-phosphate phosphatase activity"/>
    <property type="evidence" value="ECO:0000250"/>
    <property type="project" value="UniProtKB"/>
</dbReference>
<dbReference type="GO" id="GO:0046856">
    <property type="term" value="P:phosphatidylinositol dephosphorylation"/>
    <property type="evidence" value="ECO:0000250"/>
    <property type="project" value="UniProtKB"/>
</dbReference>
<dbReference type="InterPro" id="IPR002013">
    <property type="entry name" value="SAC_dom"/>
</dbReference>
<dbReference type="PANTHER" id="PTHR45662">
    <property type="entry name" value="PHOSPHATIDYLINOSITIDE PHOSPHATASE SAC1"/>
    <property type="match status" value="1"/>
</dbReference>
<dbReference type="PANTHER" id="PTHR45662:SF17">
    <property type="entry name" value="PHOSPHATIDYLINOSITOL-3-PHOSPHATASE SAC1-A"/>
    <property type="match status" value="1"/>
</dbReference>
<dbReference type="Pfam" id="PF02383">
    <property type="entry name" value="Syja_N"/>
    <property type="match status" value="1"/>
</dbReference>
<dbReference type="PROSITE" id="PS50275">
    <property type="entry name" value="SAC"/>
    <property type="match status" value="1"/>
</dbReference>
<name>SAC1A_DANRE</name>
<proteinExistence type="evidence at transcript level"/>
<reference key="1">
    <citation type="journal article" date="2013" name="Nature">
        <title>The zebrafish reference genome sequence and its relationship to the human genome.</title>
        <authorList>
            <person name="Howe K."/>
            <person name="Clark M.D."/>
            <person name="Torroja C.F."/>
            <person name="Torrance J."/>
            <person name="Berthelot C."/>
            <person name="Muffato M."/>
            <person name="Collins J.E."/>
            <person name="Humphray S."/>
            <person name="McLaren K."/>
            <person name="Matthews L."/>
            <person name="McLaren S."/>
            <person name="Sealy I."/>
            <person name="Caccamo M."/>
            <person name="Churcher C."/>
            <person name="Scott C."/>
            <person name="Barrett J.C."/>
            <person name="Koch R."/>
            <person name="Rauch G.J."/>
            <person name="White S."/>
            <person name="Chow W."/>
            <person name="Kilian B."/>
            <person name="Quintais L.T."/>
            <person name="Guerra-Assuncao J.A."/>
            <person name="Zhou Y."/>
            <person name="Gu Y."/>
            <person name="Yen J."/>
            <person name="Vogel J.H."/>
            <person name="Eyre T."/>
            <person name="Redmond S."/>
            <person name="Banerjee R."/>
            <person name="Chi J."/>
            <person name="Fu B."/>
            <person name="Langley E."/>
            <person name="Maguire S.F."/>
            <person name="Laird G.K."/>
            <person name="Lloyd D."/>
            <person name="Kenyon E."/>
            <person name="Donaldson S."/>
            <person name="Sehra H."/>
            <person name="Almeida-King J."/>
            <person name="Loveland J."/>
            <person name="Trevanion S."/>
            <person name="Jones M."/>
            <person name="Quail M."/>
            <person name="Willey D."/>
            <person name="Hunt A."/>
            <person name="Burton J."/>
            <person name="Sims S."/>
            <person name="McLay K."/>
            <person name="Plumb B."/>
            <person name="Davis J."/>
            <person name="Clee C."/>
            <person name="Oliver K."/>
            <person name="Clark R."/>
            <person name="Riddle C."/>
            <person name="Elliot D."/>
            <person name="Threadgold G."/>
            <person name="Harden G."/>
            <person name="Ware D."/>
            <person name="Begum S."/>
            <person name="Mortimore B."/>
            <person name="Kerry G."/>
            <person name="Heath P."/>
            <person name="Phillimore B."/>
            <person name="Tracey A."/>
            <person name="Corby N."/>
            <person name="Dunn M."/>
            <person name="Johnson C."/>
            <person name="Wood J."/>
            <person name="Clark S."/>
            <person name="Pelan S."/>
            <person name="Griffiths G."/>
            <person name="Smith M."/>
            <person name="Glithero R."/>
            <person name="Howden P."/>
            <person name="Barker N."/>
            <person name="Lloyd C."/>
            <person name="Stevens C."/>
            <person name="Harley J."/>
            <person name="Holt K."/>
            <person name="Panagiotidis G."/>
            <person name="Lovell J."/>
            <person name="Beasley H."/>
            <person name="Henderson C."/>
            <person name="Gordon D."/>
            <person name="Auger K."/>
            <person name="Wright D."/>
            <person name="Collins J."/>
            <person name="Raisen C."/>
            <person name="Dyer L."/>
            <person name="Leung K."/>
            <person name="Robertson L."/>
            <person name="Ambridge K."/>
            <person name="Leongamornlert D."/>
            <person name="McGuire S."/>
            <person name="Gilderthorp R."/>
            <person name="Griffiths C."/>
            <person name="Manthravadi D."/>
            <person name="Nichol S."/>
            <person name="Barker G."/>
            <person name="Whitehead S."/>
            <person name="Kay M."/>
            <person name="Brown J."/>
            <person name="Murnane C."/>
            <person name="Gray E."/>
            <person name="Humphries M."/>
            <person name="Sycamore N."/>
            <person name="Barker D."/>
            <person name="Saunders D."/>
            <person name="Wallis J."/>
            <person name="Babbage A."/>
            <person name="Hammond S."/>
            <person name="Mashreghi-Mohammadi M."/>
            <person name="Barr L."/>
            <person name="Martin S."/>
            <person name="Wray P."/>
            <person name="Ellington A."/>
            <person name="Matthews N."/>
            <person name="Ellwood M."/>
            <person name="Woodmansey R."/>
            <person name="Clark G."/>
            <person name="Cooper J."/>
            <person name="Tromans A."/>
            <person name="Grafham D."/>
            <person name="Skuce C."/>
            <person name="Pandian R."/>
            <person name="Andrews R."/>
            <person name="Harrison E."/>
            <person name="Kimberley A."/>
            <person name="Garnett J."/>
            <person name="Fosker N."/>
            <person name="Hall R."/>
            <person name="Garner P."/>
            <person name="Kelly D."/>
            <person name="Bird C."/>
            <person name="Palmer S."/>
            <person name="Gehring I."/>
            <person name="Berger A."/>
            <person name="Dooley C.M."/>
            <person name="Ersan-Urun Z."/>
            <person name="Eser C."/>
            <person name="Geiger H."/>
            <person name="Geisler M."/>
            <person name="Karotki L."/>
            <person name="Kirn A."/>
            <person name="Konantz J."/>
            <person name="Konantz M."/>
            <person name="Oberlander M."/>
            <person name="Rudolph-Geiger S."/>
            <person name="Teucke M."/>
            <person name="Lanz C."/>
            <person name="Raddatz G."/>
            <person name="Osoegawa K."/>
            <person name="Zhu B."/>
            <person name="Rapp A."/>
            <person name="Widaa S."/>
            <person name="Langford C."/>
            <person name="Yang F."/>
            <person name="Schuster S.C."/>
            <person name="Carter N.P."/>
            <person name="Harrow J."/>
            <person name="Ning Z."/>
            <person name="Herrero J."/>
            <person name="Searle S.M."/>
            <person name="Enright A."/>
            <person name="Geisler R."/>
            <person name="Plasterk R.H."/>
            <person name="Lee C."/>
            <person name="Westerfield M."/>
            <person name="de Jong P.J."/>
            <person name="Zon L.I."/>
            <person name="Postlethwait J.H."/>
            <person name="Nusslein-Volhard C."/>
            <person name="Hubbard T.J."/>
            <person name="Roest Crollius H."/>
            <person name="Rogers J."/>
            <person name="Stemple D.L."/>
        </authorList>
    </citation>
    <scope>NUCLEOTIDE SEQUENCE [LARGE SCALE GENOMIC DNA]</scope>
    <source>
        <strain>Tuebingen</strain>
    </source>
</reference>
<reference key="2">
    <citation type="submission" date="2007-04" db="EMBL/GenBank/DDBJ databases">
        <authorList>
            <consortium name="NIH - Zebrafish Gene Collection (ZGC) project"/>
        </authorList>
    </citation>
    <scope>NUCLEOTIDE SEQUENCE [LARGE SCALE MRNA]</scope>
</reference>
<feature type="chain" id="PRO_0000317176" description="Phosphatidylinositol-3-phosphatase SAC1-A">
    <location>
        <begin position="1"/>
        <end position="586"/>
    </location>
</feature>
<feature type="topological domain" description="Cytoplasmic" evidence="1">
    <location>
        <begin position="1"/>
        <end position="519"/>
    </location>
</feature>
<feature type="transmembrane region" description="Helical" evidence="3">
    <location>
        <begin position="520"/>
        <end position="540"/>
    </location>
</feature>
<feature type="topological domain" description="Lumenal" evidence="1">
    <location>
        <begin position="541"/>
        <end position="547"/>
    </location>
</feature>
<feature type="transmembrane region" description="Helical" evidence="3">
    <location>
        <begin position="548"/>
        <end position="568"/>
    </location>
</feature>
<feature type="topological domain" description="Cytoplasmic" evidence="1">
    <location>
        <begin position="569"/>
        <end position="586"/>
    </location>
</feature>
<feature type="domain" description="SAC" evidence="4">
    <location>
        <begin position="121"/>
        <end position="450"/>
    </location>
</feature>
<feature type="region of interest" description="Essential for phosphatidylinositol-4-phosphate phosphatase activity" evidence="2">
    <location>
        <begin position="451"/>
        <end position="586"/>
    </location>
</feature>
<feature type="sequence conflict" description="In Ref. 2; AAI39690." evidence="5" ref="2">
    <original>D</original>
    <variation>E</variation>
    <location>
        <position position="360"/>
    </location>
</feature>
<keyword id="KW-0256">Endoplasmic reticulum</keyword>
<keyword id="KW-0333">Golgi apparatus</keyword>
<keyword id="KW-0378">Hydrolase</keyword>
<keyword id="KW-0472">Membrane</keyword>
<keyword id="KW-1185">Reference proteome</keyword>
<keyword id="KW-0812">Transmembrane</keyword>
<keyword id="KW-1133">Transmembrane helix</keyword>
<organism>
    <name type="scientific">Danio rerio</name>
    <name type="common">Zebrafish</name>
    <name type="synonym">Brachydanio rerio</name>
    <dbReference type="NCBI Taxonomy" id="7955"/>
    <lineage>
        <taxon>Eukaryota</taxon>
        <taxon>Metazoa</taxon>
        <taxon>Chordata</taxon>
        <taxon>Craniata</taxon>
        <taxon>Vertebrata</taxon>
        <taxon>Euteleostomi</taxon>
        <taxon>Actinopterygii</taxon>
        <taxon>Neopterygii</taxon>
        <taxon>Teleostei</taxon>
        <taxon>Ostariophysi</taxon>
        <taxon>Cypriniformes</taxon>
        <taxon>Danionidae</taxon>
        <taxon>Danioninae</taxon>
        <taxon>Danio</taxon>
    </lineage>
</organism>
<accession>A4VCH0</accession>
<accession>Q1L8A6</accession>
<gene>
    <name type="primary">sacm1la</name>
    <name type="ORF">si:ch211-222e23.8</name>
</gene>
<comment type="function">
    <text evidence="1">Phosphoinositide phosphatase which catalyzes the hydrolysis of phosphatidylinositol 4-phosphate (PtdIns(4)P), phosphatidylinositol 3-phosphate (PtdIns(3)P) and has low activity towards phosphatidylinositol-3,5-bisphosphate (PtdIns(3,5)P2).</text>
</comment>
<comment type="catalytic activity">
    <reaction evidence="1">
        <text>a 1,2-diacyl-sn-glycero-3-phospho-(1D-myo-inositol-3-phosphate) + H2O = a 1,2-diacyl-sn-glycero-3-phospho-(1D-myo-inositol) + phosphate</text>
        <dbReference type="Rhea" id="RHEA:12316"/>
        <dbReference type="ChEBI" id="CHEBI:15377"/>
        <dbReference type="ChEBI" id="CHEBI:43474"/>
        <dbReference type="ChEBI" id="CHEBI:57880"/>
        <dbReference type="ChEBI" id="CHEBI:58088"/>
        <dbReference type="EC" id="3.1.3.64"/>
    </reaction>
    <physiologicalReaction direction="left-to-right" evidence="1">
        <dbReference type="Rhea" id="RHEA:12317"/>
    </physiologicalReaction>
</comment>
<comment type="catalytic activity">
    <reaction evidence="1">
        <text>a 1,2-diacyl-sn-glycero-3-phospho-(1D-myo-inositol 4-phosphate) + H2O = a 1,2-diacyl-sn-glycero-3-phospho-(1D-myo-inositol) + phosphate</text>
        <dbReference type="Rhea" id="RHEA:55652"/>
        <dbReference type="ChEBI" id="CHEBI:15377"/>
        <dbReference type="ChEBI" id="CHEBI:43474"/>
        <dbReference type="ChEBI" id="CHEBI:57880"/>
        <dbReference type="ChEBI" id="CHEBI:58178"/>
    </reaction>
    <physiologicalReaction direction="left-to-right" evidence="1">
        <dbReference type="Rhea" id="RHEA:55653"/>
    </physiologicalReaction>
</comment>
<comment type="subcellular location">
    <subcellularLocation>
        <location evidence="1">Endoplasmic reticulum membrane</location>
        <topology evidence="3">Multi-pass membrane protein</topology>
    </subcellularLocation>
    <subcellularLocation>
        <location evidence="2">Golgi apparatus membrane</location>
        <topology evidence="3">Multi-pass membrane protein</topology>
    </subcellularLocation>
</comment>
<evidence type="ECO:0000250" key="1">
    <source>
        <dbReference type="UniProtKB" id="Q9ES21"/>
    </source>
</evidence>
<evidence type="ECO:0000250" key="2">
    <source>
        <dbReference type="UniProtKB" id="Q9NTJ5"/>
    </source>
</evidence>
<evidence type="ECO:0000255" key="3"/>
<evidence type="ECO:0000255" key="4">
    <source>
        <dbReference type="PROSITE-ProRule" id="PRU00183"/>
    </source>
</evidence>
<evidence type="ECO:0000305" key="5"/>
<sequence>MANAYERFNLHSTPEKFYIEACDDGADDVLVIDRVSTEMTLAGIKDIPPSGITRPICGVMGTVRLVAGMYLIVITRKRKVGDLFGHTVWKAVEFDVISYKKTILHLTDIQMQDNKTFLTMINNVLNTDGFYFCTDYDLTHTQQRLSNTSPDFQEMSLLERADQRFMWNGNLLREIIAQPELHKFAFPVIHGFIVMKPCCINGKVFEWIIISRRSCFRAGVRYYVRGIDSEGHAANFVETEQIVQFNNARASFVQTRGSIPFFWSQRPNLKYKPKPLISKDTNHMDGLRRHFESQVLIYGKQVILNLVNQKGSELPLEQAFAKMVSSMENGFIKYIAFDFHKECSKMRWHRLQILVDAVSDMQEEFGYFMVSSDGKVLSEQSGTFRSNCMDCLDRTNVIQSLLARRSLQSQLQRMGVLHVGQKIEEQADFEKIYKNAWADNANACAKQYAGTGALKTDFTRTGKRTHWGLVMDGWNSMIRYYKNNFSDGFRQDSIDLFLGNYSVDETDSLTPLHVKKDWKFLLLPVIMVVAFSMCIICLLMAGDTWTETLAYVLFWGMASALTAAVIVVNGREFVDAPKLVQKEKMD</sequence>